<gene>
    <name evidence="1" type="primary">trpD</name>
    <name type="ordered locus">Sbal_2703</name>
</gene>
<sequence>MSTNPIQPLLDVLYQGKSLSREQTAELFGALIRGEMSEAAMAGMLVALKMRGETIDEISGAADAMRAAAKPFPCPERNNNPLHNGIVDIVGTGGDGFNTINISTTAAFVAAAAGAKVAKHGNRSVSSKSGSSDLLAQFGIDLTMSPETASRCLDALNLCFLFAPHYHGGVKHAVPVRQALKTRTLFNVLGPLINPARPEFMLLGVYSPELVLPIAKVLKALGTKRAMVVHGSGLDEVALHGNTQVAELKDGDIIEYQLTPADLGVPLAQISDLEGGEPAQNALITEAILKGRGTEAHANAVAINAGCALYVCGITDSVKAGTLLALATIQSGKAFELLSQLAKVSGEALVNGQERGR</sequence>
<organism>
    <name type="scientific">Shewanella baltica (strain OS155 / ATCC BAA-1091)</name>
    <dbReference type="NCBI Taxonomy" id="325240"/>
    <lineage>
        <taxon>Bacteria</taxon>
        <taxon>Pseudomonadati</taxon>
        <taxon>Pseudomonadota</taxon>
        <taxon>Gammaproteobacteria</taxon>
        <taxon>Alteromonadales</taxon>
        <taxon>Shewanellaceae</taxon>
        <taxon>Shewanella</taxon>
    </lineage>
</organism>
<proteinExistence type="inferred from homology"/>
<accession>A3D628</accession>
<evidence type="ECO:0000255" key="1">
    <source>
        <dbReference type="HAMAP-Rule" id="MF_00211"/>
    </source>
</evidence>
<dbReference type="EC" id="2.4.2.18" evidence="1"/>
<dbReference type="EMBL" id="CP000563">
    <property type="protein sequence ID" value="ABN62191.1"/>
    <property type="molecule type" value="Genomic_DNA"/>
</dbReference>
<dbReference type="RefSeq" id="WP_011847147.1">
    <property type="nucleotide sequence ID" value="NC_009052.1"/>
</dbReference>
<dbReference type="SMR" id="A3D628"/>
<dbReference type="STRING" id="325240.Sbal_2703"/>
<dbReference type="KEGG" id="sbl:Sbal_2703"/>
<dbReference type="HOGENOM" id="CLU_034315_2_1_6"/>
<dbReference type="OrthoDB" id="9806430at2"/>
<dbReference type="UniPathway" id="UPA00035">
    <property type="reaction ID" value="UER00041"/>
</dbReference>
<dbReference type="Proteomes" id="UP000001557">
    <property type="component" value="Chromosome"/>
</dbReference>
<dbReference type="GO" id="GO:0005829">
    <property type="term" value="C:cytosol"/>
    <property type="evidence" value="ECO:0007669"/>
    <property type="project" value="TreeGrafter"/>
</dbReference>
<dbReference type="GO" id="GO:0004048">
    <property type="term" value="F:anthranilate phosphoribosyltransferase activity"/>
    <property type="evidence" value="ECO:0007669"/>
    <property type="project" value="UniProtKB-UniRule"/>
</dbReference>
<dbReference type="GO" id="GO:0000287">
    <property type="term" value="F:magnesium ion binding"/>
    <property type="evidence" value="ECO:0007669"/>
    <property type="project" value="UniProtKB-UniRule"/>
</dbReference>
<dbReference type="GO" id="GO:0000162">
    <property type="term" value="P:L-tryptophan biosynthetic process"/>
    <property type="evidence" value="ECO:0007669"/>
    <property type="project" value="UniProtKB-UniRule"/>
</dbReference>
<dbReference type="FunFam" id="3.40.1030.10:FF:000002">
    <property type="entry name" value="Anthranilate phosphoribosyltransferase"/>
    <property type="match status" value="1"/>
</dbReference>
<dbReference type="Gene3D" id="3.40.1030.10">
    <property type="entry name" value="Nucleoside phosphorylase/phosphoribosyltransferase catalytic domain"/>
    <property type="match status" value="1"/>
</dbReference>
<dbReference type="Gene3D" id="1.20.970.10">
    <property type="entry name" value="Transferase, Pyrimidine Nucleoside Phosphorylase, Chain C"/>
    <property type="match status" value="1"/>
</dbReference>
<dbReference type="HAMAP" id="MF_00211">
    <property type="entry name" value="TrpD"/>
    <property type="match status" value="1"/>
</dbReference>
<dbReference type="InterPro" id="IPR005940">
    <property type="entry name" value="Anthranilate_Pribosyl_Tfrase"/>
</dbReference>
<dbReference type="InterPro" id="IPR000312">
    <property type="entry name" value="Glycosyl_Trfase_fam3"/>
</dbReference>
<dbReference type="InterPro" id="IPR017459">
    <property type="entry name" value="Glycosyl_Trfase_fam3_N_dom"/>
</dbReference>
<dbReference type="InterPro" id="IPR036320">
    <property type="entry name" value="Glycosyl_Trfase_fam3_N_dom_sf"/>
</dbReference>
<dbReference type="InterPro" id="IPR035902">
    <property type="entry name" value="Nuc_phospho_transferase"/>
</dbReference>
<dbReference type="NCBIfam" id="TIGR01245">
    <property type="entry name" value="trpD"/>
    <property type="match status" value="1"/>
</dbReference>
<dbReference type="PANTHER" id="PTHR43285">
    <property type="entry name" value="ANTHRANILATE PHOSPHORIBOSYLTRANSFERASE"/>
    <property type="match status" value="1"/>
</dbReference>
<dbReference type="PANTHER" id="PTHR43285:SF2">
    <property type="entry name" value="ANTHRANILATE PHOSPHORIBOSYLTRANSFERASE"/>
    <property type="match status" value="1"/>
</dbReference>
<dbReference type="Pfam" id="PF02885">
    <property type="entry name" value="Glycos_trans_3N"/>
    <property type="match status" value="1"/>
</dbReference>
<dbReference type="Pfam" id="PF00591">
    <property type="entry name" value="Glycos_transf_3"/>
    <property type="match status" value="1"/>
</dbReference>
<dbReference type="SUPFAM" id="SSF52418">
    <property type="entry name" value="Nucleoside phosphorylase/phosphoribosyltransferase catalytic domain"/>
    <property type="match status" value="1"/>
</dbReference>
<dbReference type="SUPFAM" id="SSF47648">
    <property type="entry name" value="Nucleoside phosphorylase/phosphoribosyltransferase N-terminal domain"/>
    <property type="match status" value="1"/>
</dbReference>
<feature type="chain" id="PRO_1000043063" description="Anthranilate phosphoribosyltransferase">
    <location>
        <begin position="1"/>
        <end position="357"/>
    </location>
</feature>
<feature type="binding site" evidence="1">
    <location>
        <position position="91"/>
    </location>
    <ligand>
        <name>5-phospho-alpha-D-ribose 1-diphosphate</name>
        <dbReference type="ChEBI" id="CHEBI:58017"/>
    </ligand>
</feature>
<feature type="binding site" evidence="1">
    <location>
        <position position="91"/>
    </location>
    <ligand>
        <name>anthranilate</name>
        <dbReference type="ChEBI" id="CHEBI:16567"/>
        <label>1</label>
    </ligand>
</feature>
<feature type="binding site" evidence="1">
    <location>
        <begin position="94"/>
        <end position="95"/>
    </location>
    <ligand>
        <name>5-phospho-alpha-D-ribose 1-diphosphate</name>
        <dbReference type="ChEBI" id="CHEBI:58017"/>
    </ligand>
</feature>
<feature type="binding site" evidence="1">
    <location>
        <position position="99"/>
    </location>
    <ligand>
        <name>5-phospho-alpha-D-ribose 1-diphosphate</name>
        <dbReference type="ChEBI" id="CHEBI:58017"/>
    </ligand>
</feature>
<feature type="binding site" evidence="1">
    <location>
        <begin position="101"/>
        <end position="104"/>
    </location>
    <ligand>
        <name>5-phospho-alpha-D-ribose 1-diphosphate</name>
        <dbReference type="ChEBI" id="CHEBI:58017"/>
    </ligand>
</feature>
<feature type="binding site" evidence="1">
    <location>
        <position position="103"/>
    </location>
    <ligand>
        <name>Mg(2+)</name>
        <dbReference type="ChEBI" id="CHEBI:18420"/>
        <label>1</label>
    </ligand>
</feature>
<feature type="binding site" evidence="1">
    <location>
        <begin position="119"/>
        <end position="127"/>
    </location>
    <ligand>
        <name>5-phospho-alpha-D-ribose 1-diphosphate</name>
        <dbReference type="ChEBI" id="CHEBI:58017"/>
    </ligand>
</feature>
<feature type="binding site" evidence="1">
    <location>
        <position position="122"/>
    </location>
    <ligand>
        <name>anthranilate</name>
        <dbReference type="ChEBI" id="CHEBI:16567"/>
        <label>1</label>
    </ligand>
</feature>
<feature type="binding site" evidence="1">
    <location>
        <position position="131"/>
    </location>
    <ligand>
        <name>5-phospho-alpha-D-ribose 1-diphosphate</name>
        <dbReference type="ChEBI" id="CHEBI:58017"/>
    </ligand>
</feature>
<feature type="binding site" evidence="1">
    <location>
        <position position="177"/>
    </location>
    <ligand>
        <name>anthranilate</name>
        <dbReference type="ChEBI" id="CHEBI:16567"/>
        <label>2</label>
    </ligand>
</feature>
<feature type="binding site" evidence="1">
    <location>
        <position position="235"/>
    </location>
    <ligand>
        <name>Mg(2+)</name>
        <dbReference type="ChEBI" id="CHEBI:18420"/>
        <label>2</label>
    </ligand>
</feature>
<feature type="binding site" evidence="1">
    <location>
        <position position="236"/>
    </location>
    <ligand>
        <name>Mg(2+)</name>
        <dbReference type="ChEBI" id="CHEBI:18420"/>
        <label>1</label>
    </ligand>
</feature>
<feature type="binding site" evidence="1">
    <location>
        <position position="236"/>
    </location>
    <ligand>
        <name>Mg(2+)</name>
        <dbReference type="ChEBI" id="CHEBI:18420"/>
        <label>2</label>
    </ligand>
</feature>
<name>TRPD_SHEB5</name>
<protein>
    <recommendedName>
        <fullName evidence="1">Anthranilate phosphoribosyltransferase</fullName>
        <ecNumber evidence="1">2.4.2.18</ecNumber>
    </recommendedName>
</protein>
<comment type="function">
    <text evidence="1">Catalyzes the transfer of the phosphoribosyl group of 5-phosphorylribose-1-pyrophosphate (PRPP) to anthranilate to yield N-(5'-phosphoribosyl)-anthranilate (PRA).</text>
</comment>
<comment type="catalytic activity">
    <reaction evidence="1">
        <text>N-(5-phospho-beta-D-ribosyl)anthranilate + diphosphate = 5-phospho-alpha-D-ribose 1-diphosphate + anthranilate</text>
        <dbReference type="Rhea" id="RHEA:11768"/>
        <dbReference type="ChEBI" id="CHEBI:16567"/>
        <dbReference type="ChEBI" id="CHEBI:18277"/>
        <dbReference type="ChEBI" id="CHEBI:33019"/>
        <dbReference type="ChEBI" id="CHEBI:58017"/>
        <dbReference type="EC" id="2.4.2.18"/>
    </reaction>
</comment>
<comment type="cofactor">
    <cofactor evidence="1">
        <name>Mg(2+)</name>
        <dbReference type="ChEBI" id="CHEBI:18420"/>
    </cofactor>
    <text evidence="1">Binds 2 magnesium ions per monomer.</text>
</comment>
<comment type="pathway">
    <text evidence="1">Amino-acid biosynthesis; L-tryptophan biosynthesis; L-tryptophan from chorismate: step 2/5.</text>
</comment>
<comment type="subunit">
    <text evidence="1">Homodimer.</text>
</comment>
<comment type="similarity">
    <text evidence="1">Belongs to the anthranilate phosphoribosyltransferase family.</text>
</comment>
<reference key="1">
    <citation type="submission" date="2007-02" db="EMBL/GenBank/DDBJ databases">
        <title>Complete sequence of chromosome of Shewanella baltica OS155.</title>
        <authorList>
            <consortium name="US DOE Joint Genome Institute"/>
            <person name="Copeland A."/>
            <person name="Lucas S."/>
            <person name="Lapidus A."/>
            <person name="Barry K."/>
            <person name="Detter J.C."/>
            <person name="Glavina del Rio T."/>
            <person name="Hammon N."/>
            <person name="Israni S."/>
            <person name="Dalin E."/>
            <person name="Tice H."/>
            <person name="Pitluck S."/>
            <person name="Sims D.R."/>
            <person name="Brettin T."/>
            <person name="Bruce D."/>
            <person name="Han C."/>
            <person name="Tapia R."/>
            <person name="Brainard J."/>
            <person name="Schmutz J."/>
            <person name="Larimer F."/>
            <person name="Land M."/>
            <person name="Hauser L."/>
            <person name="Kyrpides N."/>
            <person name="Mikhailova N."/>
            <person name="Brettar I."/>
            <person name="Klappenbach J."/>
            <person name="Konstantinidis K."/>
            <person name="Rodrigues J."/>
            <person name="Tiedje J."/>
            <person name="Richardson P."/>
        </authorList>
    </citation>
    <scope>NUCLEOTIDE SEQUENCE [LARGE SCALE GENOMIC DNA]</scope>
    <source>
        <strain>OS155 / ATCC BAA-1091</strain>
    </source>
</reference>
<keyword id="KW-0028">Amino-acid biosynthesis</keyword>
<keyword id="KW-0057">Aromatic amino acid biosynthesis</keyword>
<keyword id="KW-0328">Glycosyltransferase</keyword>
<keyword id="KW-0460">Magnesium</keyword>
<keyword id="KW-0479">Metal-binding</keyword>
<keyword id="KW-1185">Reference proteome</keyword>
<keyword id="KW-0808">Transferase</keyword>
<keyword id="KW-0822">Tryptophan biosynthesis</keyword>